<dbReference type="EC" id="3.4.24.78" evidence="1"/>
<dbReference type="EMBL" id="AE016879">
    <property type="protein sequence ID" value="AAP28255.1"/>
    <property type="molecule type" value="Genomic_DNA"/>
</dbReference>
<dbReference type="EMBL" id="AE017334">
    <property type="protein sequence ID" value="AAT33667.1"/>
    <property type="molecule type" value="Genomic_DNA"/>
</dbReference>
<dbReference type="EMBL" id="AE017225">
    <property type="protein sequence ID" value="AAT56519.1"/>
    <property type="molecule type" value="Genomic_DNA"/>
</dbReference>
<dbReference type="RefSeq" id="NP_846769.1">
    <property type="nucleotide sequence ID" value="NC_003997.3"/>
</dbReference>
<dbReference type="RefSeq" id="WP_000662639.1">
    <property type="nucleotide sequence ID" value="NZ_WXXJ01000027.1"/>
</dbReference>
<dbReference type="RefSeq" id="YP_030468.1">
    <property type="nucleotide sequence ID" value="NC_005945.1"/>
</dbReference>
<dbReference type="SMR" id="Q81LR5"/>
<dbReference type="STRING" id="261594.GBAA_4546"/>
<dbReference type="MEROPS" id="A25.001"/>
<dbReference type="DNASU" id="1088279"/>
<dbReference type="GeneID" id="45024198"/>
<dbReference type="KEGG" id="ban:BA_4546"/>
<dbReference type="KEGG" id="banh:HYU01_22180"/>
<dbReference type="KEGG" id="bar:GBAA_4546"/>
<dbReference type="KEGG" id="bat:BAS4220"/>
<dbReference type="PATRIC" id="fig|198094.11.peg.4514"/>
<dbReference type="eggNOG" id="COG0680">
    <property type="taxonomic scope" value="Bacteria"/>
</dbReference>
<dbReference type="HOGENOM" id="CLU_055087_1_0_9"/>
<dbReference type="OMA" id="PMGNYIT"/>
<dbReference type="OrthoDB" id="9777293at2"/>
<dbReference type="Proteomes" id="UP000000427">
    <property type="component" value="Chromosome"/>
</dbReference>
<dbReference type="Proteomes" id="UP000000594">
    <property type="component" value="Chromosome"/>
</dbReference>
<dbReference type="GO" id="GO:0004222">
    <property type="term" value="F:metalloendopeptidase activity"/>
    <property type="evidence" value="ECO:0007669"/>
    <property type="project" value="UniProtKB-UniRule"/>
</dbReference>
<dbReference type="GO" id="GO:0006508">
    <property type="term" value="P:proteolysis"/>
    <property type="evidence" value="ECO:0007669"/>
    <property type="project" value="UniProtKB-UniRule"/>
</dbReference>
<dbReference type="GO" id="GO:0009847">
    <property type="term" value="P:spore germination"/>
    <property type="evidence" value="ECO:0007669"/>
    <property type="project" value="UniProtKB-UniRule"/>
</dbReference>
<dbReference type="FunFam" id="3.40.50.1450:FF:000004">
    <property type="entry name" value="Germination protease"/>
    <property type="match status" value="1"/>
</dbReference>
<dbReference type="Gene3D" id="3.40.50.1450">
    <property type="entry name" value="HybD-like"/>
    <property type="match status" value="1"/>
</dbReference>
<dbReference type="HAMAP" id="MF_00626">
    <property type="entry name" value="Germination_prot"/>
    <property type="match status" value="1"/>
</dbReference>
<dbReference type="InterPro" id="IPR023430">
    <property type="entry name" value="Pept_HybD-like_dom_sf"/>
</dbReference>
<dbReference type="InterPro" id="IPR005080">
    <property type="entry name" value="Peptidase_A25"/>
</dbReference>
<dbReference type="NCBIfam" id="TIGR01441">
    <property type="entry name" value="GPR"/>
    <property type="match status" value="1"/>
</dbReference>
<dbReference type="Pfam" id="PF03418">
    <property type="entry name" value="Peptidase_A25"/>
    <property type="match status" value="1"/>
</dbReference>
<dbReference type="PIRSF" id="PIRSF019549">
    <property type="entry name" value="Peptidase_A25"/>
    <property type="match status" value="1"/>
</dbReference>
<dbReference type="SUPFAM" id="SSF53163">
    <property type="entry name" value="HybD-like"/>
    <property type="match status" value="1"/>
</dbReference>
<proteinExistence type="inferred from homology"/>
<sequence>MKEPLDLSKYSVRTDLAVEAHQMLQERQEEQQQGIQGVIVKEREEEGIIITKVTIDEVASESMGKKPGNYLTLEVQGIRQQDTELQQKVERIFAKEFSYFLEEVGVTKEASCLIVGLGNWNVTPDALGPIVVENVLVTRHLFQLQPESVEEGFRPVSAIRPGVMGITGIETSDVIYGIIEKTKPDFVIAIDALAARSIERVNSTIQISDTGIHPGSGVGNKRKELSKETLGIPVIAIGVPTVVDAVSITSDTIDFILKHFGREMKEGNKPSRSLLPAGFTFGEKKKLTEEDMPDEKSRNMFLGAVGTLEDEEKRKLIYEVLSPLGHNLMVTPKEVDAFIEDMANVIASGLNAALHHQIDQDNTGAYTH</sequence>
<evidence type="ECO:0000255" key="1">
    <source>
        <dbReference type="HAMAP-Rule" id="MF_00626"/>
    </source>
</evidence>
<reference key="1">
    <citation type="journal article" date="2003" name="Nature">
        <title>The genome sequence of Bacillus anthracis Ames and comparison to closely related bacteria.</title>
        <authorList>
            <person name="Read T.D."/>
            <person name="Peterson S.N."/>
            <person name="Tourasse N.J."/>
            <person name="Baillie L.W."/>
            <person name="Paulsen I.T."/>
            <person name="Nelson K.E."/>
            <person name="Tettelin H."/>
            <person name="Fouts D.E."/>
            <person name="Eisen J.A."/>
            <person name="Gill S.R."/>
            <person name="Holtzapple E.K."/>
            <person name="Okstad O.A."/>
            <person name="Helgason E."/>
            <person name="Rilstone J."/>
            <person name="Wu M."/>
            <person name="Kolonay J.F."/>
            <person name="Beanan M.J."/>
            <person name="Dodson R.J."/>
            <person name="Brinkac L.M."/>
            <person name="Gwinn M.L."/>
            <person name="DeBoy R.T."/>
            <person name="Madpu R."/>
            <person name="Daugherty S.C."/>
            <person name="Durkin A.S."/>
            <person name="Haft D.H."/>
            <person name="Nelson W.C."/>
            <person name="Peterson J.D."/>
            <person name="Pop M."/>
            <person name="Khouri H.M."/>
            <person name="Radune D."/>
            <person name="Benton J.L."/>
            <person name="Mahamoud Y."/>
            <person name="Jiang L."/>
            <person name="Hance I.R."/>
            <person name="Weidman J.F."/>
            <person name="Berry K.J."/>
            <person name="Plaut R.D."/>
            <person name="Wolf A.M."/>
            <person name="Watkins K.L."/>
            <person name="Nierman W.C."/>
            <person name="Hazen A."/>
            <person name="Cline R.T."/>
            <person name="Redmond C."/>
            <person name="Thwaite J.E."/>
            <person name="White O."/>
            <person name="Salzberg S.L."/>
            <person name="Thomason B."/>
            <person name="Friedlander A.M."/>
            <person name="Koehler T.M."/>
            <person name="Hanna P.C."/>
            <person name="Kolstoe A.-B."/>
            <person name="Fraser C.M."/>
        </authorList>
    </citation>
    <scope>NUCLEOTIDE SEQUENCE [LARGE SCALE GENOMIC DNA]</scope>
    <source>
        <strain>Ames / isolate Porton</strain>
    </source>
</reference>
<reference key="2">
    <citation type="journal article" date="2009" name="J. Bacteriol.">
        <title>The complete genome sequence of Bacillus anthracis Ames 'Ancestor'.</title>
        <authorList>
            <person name="Ravel J."/>
            <person name="Jiang L."/>
            <person name="Stanley S.T."/>
            <person name="Wilson M.R."/>
            <person name="Decker R.S."/>
            <person name="Read T.D."/>
            <person name="Worsham P."/>
            <person name="Keim P.S."/>
            <person name="Salzberg S.L."/>
            <person name="Fraser-Liggett C.M."/>
            <person name="Rasko D.A."/>
        </authorList>
    </citation>
    <scope>NUCLEOTIDE SEQUENCE [LARGE SCALE GENOMIC DNA]</scope>
    <source>
        <strain>Ames ancestor</strain>
    </source>
</reference>
<reference key="3">
    <citation type="submission" date="2004-01" db="EMBL/GenBank/DDBJ databases">
        <title>Complete genome sequence of Bacillus anthracis Sterne.</title>
        <authorList>
            <person name="Brettin T.S."/>
            <person name="Bruce D."/>
            <person name="Challacombe J.F."/>
            <person name="Gilna P."/>
            <person name="Han C."/>
            <person name="Hill K."/>
            <person name="Hitchcock P."/>
            <person name="Jackson P."/>
            <person name="Keim P."/>
            <person name="Longmire J."/>
            <person name="Lucas S."/>
            <person name="Okinaka R."/>
            <person name="Richardson P."/>
            <person name="Rubin E."/>
            <person name="Tice H."/>
        </authorList>
    </citation>
    <scope>NUCLEOTIDE SEQUENCE [LARGE SCALE GENOMIC DNA]</scope>
    <source>
        <strain>Sterne</strain>
    </source>
</reference>
<comment type="function">
    <text evidence="1">Initiates the rapid degradation of small, acid-soluble proteins during spore germination.</text>
</comment>
<comment type="catalytic activity">
    <reaction evidence="1">
        <text>Endopeptidase action with P4 Glu or Asp, P1 preferably Glu &gt; Asp, P1' hydrophobic and P2' Ala.</text>
        <dbReference type="EC" id="3.4.24.78"/>
    </reaction>
</comment>
<comment type="subunit">
    <text evidence="1">Homotetramer.</text>
</comment>
<comment type="PTM">
    <text evidence="1">Autoproteolytically processed. The inactive tetrameric zymogen termed p46 autoprocesses to a smaller form termed p41, which is active only during spore germination.</text>
</comment>
<comment type="similarity">
    <text evidence="1">Belongs to the peptidase A25 family.</text>
</comment>
<protein>
    <recommendedName>
        <fullName evidence="1">Germination protease</fullName>
        <ecNumber evidence="1">3.4.24.78</ecNumber>
    </recommendedName>
    <alternativeName>
        <fullName evidence="1">GPR endopeptidase</fullName>
    </alternativeName>
    <alternativeName>
        <fullName evidence="1">Germination proteinase</fullName>
    </alternativeName>
    <alternativeName>
        <fullName evidence="1">Spore protease</fullName>
    </alternativeName>
</protein>
<organism>
    <name type="scientific">Bacillus anthracis</name>
    <dbReference type="NCBI Taxonomy" id="1392"/>
    <lineage>
        <taxon>Bacteria</taxon>
        <taxon>Bacillati</taxon>
        <taxon>Bacillota</taxon>
        <taxon>Bacilli</taxon>
        <taxon>Bacillales</taxon>
        <taxon>Bacillaceae</taxon>
        <taxon>Bacillus</taxon>
        <taxon>Bacillus cereus group</taxon>
    </lineage>
</organism>
<name>GPR_BACAN</name>
<gene>
    <name evidence="1" type="primary">gpr</name>
    <name type="ordered locus">BA_4546</name>
    <name type="ordered locus">GBAA_4546</name>
    <name type="ordered locus">BAS4220</name>
</gene>
<accession>Q81LR5</accession>
<accession>Q6HT70</accession>
<accession>Q6KMG0</accession>
<feature type="propeptide" id="PRO_0000026856" evidence="1">
    <location>
        <begin position="1"/>
        <end position="15"/>
    </location>
</feature>
<feature type="chain" id="PRO_0000026857" description="Germination protease">
    <location>
        <begin position="16"/>
        <end position="368"/>
    </location>
</feature>
<keyword id="KW-0378">Hydrolase</keyword>
<keyword id="KW-0645">Protease</keyword>
<keyword id="KW-1185">Reference proteome</keyword>
<keyword id="KW-0865">Zymogen</keyword>